<proteinExistence type="evidence at transcript level"/>
<feature type="chain" id="PRO_0000094819" description="Dual specificity protein phosphatase 12">
    <location>
        <begin position="1"/>
        <end position="339"/>
    </location>
</feature>
<feature type="domain" description="Tyrosine-protein phosphatase" evidence="4">
    <location>
        <begin position="26"/>
        <end position="170"/>
    </location>
</feature>
<feature type="region of interest" description="Disordered" evidence="5">
    <location>
        <begin position="1"/>
        <end position="25"/>
    </location>
</feature>
<feature type="active site" description="Phosphocysteine intermediate" evidence="4">
    <location>
        <position position="114"/>
    </location>
</feature>
<feature type="binding site" evidence="3">
    <location>
        <begin position="115"/>
        <end position="120"/>
    </location>
    <ligand>
        <name>substrate</name>
    </ligand>
</feature>
<feature type="modified residue" description="N-acetylmethionine" evidence="3">
    <location>
        <position position="1"/>
    </location>
</feature>
<feature type="modified residue" description="Phosphoserine" evidence="3">
    <location>
        <position position="334"/>
    </location>
</feature>
<feature type="sequence conflict" description="In Ref. 2; AAG44739." evidence="6" ref="2">
    <original>S</original>
    <variation>T</variation>
    <location>
        <position position="7"/>
    </location>
</feature>
<accession>Q9D0T2</accession>
<accession>Q9EQD3</accession>
<dbReference type="EC" id="3.1.3.16" evidence="2"/>
<dbReference type="EC" id="3.1.3.48" evidence="2"/>
<dbReference type="EMBL" id="AF280810">
    <property type="protein sequence ID" value="AAK69508.1"/>
    <property type="molecule type" value="mRNA"/>
</dbReference>
<dbReference type="EMBL" id="AF268196">
    <property type="protein sequence ID" value="AAG44739.1"/>
    <property type="molecule type" value="mRNA"/>
</dbReference>
<dbReference type="EMBL" id="AK004488">
    <property type="protein sequence ID" value="BAB23328.1"/>
    <property type="molecule type" value="mRNA"/>
</dbReference>
<dbReference type="CCDS" id="CCDS15474.1"/>
<dbReference type="RefSeq" id="NP_075662.2">
    <property type="nucleotide sequence ID" value="NM_023173.2"/>
</dbReference>
<dbReference type="SMR" id="Q9D0T2"/>
<dbReference type="BioGRID" id="219852">
    <property type="interactions" value="2"/>
</dbReference>
<dbReference type="FunCoup" id="Q9D0T2">
    <property type="interactions" value="4079"/>
</dbReference>
<dbReference type="STRING" id="10090.ENSMUSP00000027970"/>
<dbReference type="GlyGen" id="Q9D0T2">
    <property type="glycosylation" value="1 site"/>
</dbReference>
<dbReference type="PhosphoSitePlus" id="Q9D0T2"/>
<dbReference type="SwissPalm" id="Q9D0T2"/>
<dbReference type="PaxDb" id="10090-ENSMUSP00000027970"/>
<dbReference type="ProteomicsDB" id="277528"/>
<dbReference type="Pumba" id="Q9D0T2"/>
<dbReference type="Antibodypedia" id="1653">
    <property type="antibodies" value="227 antibodies from 25 providers"/>
</dbReference>
<dbReference type="DNASU" id="80915"/>
<dbReference type="Ensembl" id="ENSMUST00000027970.14">
    <property type="protein sequence ID" value="ENSMUSP00000027970.8"/>
    <property type="gene ID" value="ENSMUSG00000026659.14"/>
</dbReference>
<dbReference type="GeneID" id="80915"/>
<dbReference type="KEGG" id="mmu:80915"/>
<dbReference type="UCSC" id="uc007dml.1">
    <property type="organism name" value="mouse"/>
</dbReference>
<dbReference type="AGR" id="MGI:1890614"/>
<dbReference type="CTD" id="11266"/>
<dbReference type="MGI" id="MGI:1890614">
    <property type="gene designation" value="Dusp12"/>
</dbReference>
<dbReference type="VEuPathDB" id="HostDB:ENSMUSG00000026659"/>
<dbReference type="eggNOG" id="KOG1716">
    <property type="taxonomic scope" value="Eukaryota"/>
</dbReference>
<dbReference type="GeneTree" id="ENSGT00930000151041"/>
<dbReference type="HOGENOM" id="CLU_023312_1_0_1"/>
<dbReference type="InParanoid" id="Q9D0T2"/>
<dbReference type="OMA" id="FAWQGMQ"/>
<dbReference type="OrthoDB" id="2017893at2759"/>
<dbReference type="PhylomeDB" id="Q9D0T2"/>
<dbReference type="TreeFam" id="TF105123"/>
<dbReference type="BioGRID-ORCS" id="80915">
    <property type="hits" value="17 hits in 81 CRISPR screens"/>
</dbReference>
<dbReference type="ChiTaRS" id="Dusp12">
    <property type="organism name" value="mouse"/>
</dbReference>
<dbReference type="PRO" id="PR:Q9D0T2"/>
<dbReference type="Proteomes" id="UP000000589">
    <property type="component" value="Chromosome 1"/>
</dbReference>
<dbReference type="RNAct" id="Q9D0T2">
    <property type="molecule type" value="protein"/>
</dbReference>
<dbReference type="Bgee" id="ENSMUSG00000026659">
    <property type="expression patterns" value="Expressed in primary oocyte and 258 other cell types or tissues"/>
</dbReference>
<dbReference type="ExpressionAtlas" id="Q9D0T2">
    <property type="expression patterns" value="baseline and differential"/>
</dbReference>
<dbReference type="GO" id="GO:0005737">
    <property type="term" value="C:cytoplasm"/>
    <property type="evidence" value="ECO:0000250"/>
    <property type="project" value="UniProtKB"/>
</dbReference>
<dbReference type="GO" id="GO:0005829">
    <property type="term" value="C:cytosol"/>
    <property type="evidence" value="ECO:0007669"/>
    <property type="project" value="UniProtKB-SubCell"/>
</dbReference>
<dbReference type="GO" id="GO:0005654">
    <property type="term" value="C:nucleoplasm"/>
    <property type="evidence" value="ECO:0007669"/>
    <property type="project" value="Ensembl"/>
</dbReference>
<dbReference type="GO" id="GO:0005634">
    <property type="term" value="C:nucleus"/>
    <property type="evidence" value="ECO:0000250"/>
    <property type="project" value="UniProtKB"/>
</dbReference>
<dbReference type="GO" id="GO:0019900">
    <property type="term" value="F:kinase binding"/>
    <property type="evidence" value="ECO:0007669"/>
    <property type="project" value="Ensembl"/>
</dbReference>
<dbReference type="GO" id="GO:0004722">
    <property type="term" value="F:protein serine/threonine phosphatase activity"/>
    <property type="evidence" value="ECO:0007669"/>
    <property type="project" value="UniProtKB-EC"/>
</dbReference>
<dbReference type="GO" id="GO:0004725">
    <property type="term" value="F:protein tyrosine phosphatase activity"/>
    <property type="evidence" value="ECO:0007669"/>
    <property type="project" value="UniProtKB-EC"/>
</dbReference>
<dbReference type="GO" id="GO:0008138">
    <property type="term" value="F:protein tyrosine/serine/threonine phosphatase activity"/>
    <property type="evidence" value="ECO:0000314"/>
    <property type="project" value="MGI"/>
</dbReference>
<dbReference type="GO" id="GO:0008270">
    <property type="term" value="F:zinc ion binding"/>
    <property type="evidence" value="ECO:0000250"/>
    <property type="project" value="UniProtKB"/>
</dbReference>
<dbReference type="CDD" id="cd14520">
    <property type="entry name" value="DSP_DUSP12"/>
    <property type="match status" value="1"/>
</dbReference>
<dbReference type="FunFam" id="3.90.190.10:FF:000056">
    <property type="entry name" value="Dual specificity phosphatase 12"/>
    <property type="match status" value="1"/>
</dbReference>
<dbReference type="Gene3D" id="3.90.190.10">
    <property type="entry name" value="Protein tyrosine phosphatase superfamily"/>
    <property type="match status" value="1"/>
</dbReference>
<dbReference type="InterPro" id="IPR000340">
    <property type="entry name" value="Dual-sp_phosphatase_cat-dom"/>
</dbReference>
<dbReference type="InterPro" id="IPR016278">
    <property type="entry name" value="DUSP12"/>
</dbReference>
<dbReference type="InterPro" id="IPR029021">
    <property type="entry name" value="Prot-tyrosine_phosphatase-like"/>
</dbReference>
<dbReference type="InterPro" id="IPR000387">
    <property type="entry name" value="Tyr_Pase_dom"/>
</dbReference>
<dbReference type="InterPro" id="IPR020422">
    <property type="entry name" value="TYR_PHOSPHATASE_DUAL_dom"/>
</dbReference>
<dbReference type="PANTHER" id="PTHR45848:SF4">
    <property type="entry name" value="DUAL SPECIFICITY PROTEIN PHOSPHATASE 12"/>
    <property type="match status" value="1"/>
</dbReference>
<dbReference type="PANTHER" id="PTHR45848">
    <property type="entry name" value="DUAL SPECIFICITY PROTEIN PHOSPHATASE 12 FAMILY MEMBER"/>
    <property type="match status" value="1"/>
</dbReference>
<dbReference type="Pfam" id="PF00782">
    <property type="entry name" value="DSPc"/>
    <property type="match status" value="1"/>
</dbReference>
<dbReference type="PIRSF" id="PIRSF000941">
    <property type="entry name" value="DUSP12"/>
    <property type="match status" value="1"/>
</dbReference>
<dbReference type="SMART" id="SM00195">
    <property type="entry name" value="DSPc"/>
    <property type="match status" value="1"/>
</dbReference>
<dbReference type="SUPFAM" id="SSF52799">
    <property type="entry name" value="(Phosphotyrosine protein) phosphatases II"/>
    <property type="match status" value="1"/>
</dbReference>
<dbReference type="PROSITE" id="PS50056">
    <property type="entry name" value="TYR_PHOSPHATASE_2"/>
    <property type="match status" value="1"/>
</dbReference>
<dbReference type="PROSITE" id="PS50054">
    <property type="entry name" value="TYR_PHOSPHATASE_DUAL"/>
    <property type="match status" value="1"/>
</dbReference>
<sequence length="339" mass="37159">MLEAQGSNHGCERQAPTASPASSAGHAVEVRPGLYLGGAAAVAEPGHLREAGITAVLTVDSEPAFPAGAGFEGLRSLFVPALDKPETDLLSHLDRCVAFIGQARSEGRAVLVHCHAGVSRSVAVVMAFIMKTDQLTFEKAYDILRTVKPEAKVNEGFEWQLKLYEAMGYEVDTSSAFYKQYRLQKVTEKCPKLWNLPQELFAVDPTTISQGLKDDILYKCRKCRRSLFRHSSILGHSEGSGPIAFAHKRTAPSSVLTTGSQAQCTSYFIEPVQWMESTLLGVMDGQLLCPKCSAKLGSFNWYGEQCSCGRWITPAFQIHKNRVDEMKMLPVLGSQTKKL</sequence>
<gene>
    <name type="primary">Dusp12</name>
</gene>
<protein>
    <recommendedName>
        <fullName>Dual specificity protein phosphatase 12</fullName>
        <ecNumber evidence="2">3.1.3.16</ecNumber>
        <ecNumber evidence="2">3.1.3.48</ecNumber>
    </recommendedName>
    <alternativeName>
        <fullName>Dual specificity phosphatase T-DSP4</fullName>
    </alternativeName>
    <alternativeName>
        <fullName>Dual specificity phosphatase VH1</fullName>
    </alternativeName>
</protein>
<keyword id="KW-0007">Acetylation</keyword>
<keyword id="KW-0963">Cytoplasm</keyword>
<keyword id="KW-0378">Hydrolase</keyword>
<keyword id="KW-0479">Metal-binding</keyword>
<keyword id="KW-0539">Nucleus</keyword>
<keyword id="KW-0597">Phosphoprotein</keyword>
<keyword id="KW-0904">Protein phosphatase</keyword>
<keyword id="KW-1185">Reference proteome</keyword>
<keyword id="KW-0862">Zinc</keyword>
<organism>
    <name type="scientific">Mus musculus</name>
    <name type="common">Mouse</name>
    <dbReference type="NCBI Taxonomy" id="10090"/>
    <lineage>
        <taxon>Eukaryota</taxon>
        <taxon>Metazoa</taxon>
        <taxon>Chordata</taxon>
        <taxon>Craniata</taxon>
        <taxon>Vertebrata</taxon>
        <taxon>Euteleostomi</taxon>
        <taxon>Mammalia</taxon>
        <taxon>Eutheria</taxon>
        <taxon>Euarchontoglires</taxon>
        <taxon>Glires</taxon>
        <taxon>Rodentia</taxon>
        <taxon>Myomorpha</taxon>
        <taxon>Muroidea</taxon>
        <taxon>Muridae</taxon>
        <taxon>Murinae</taxon>
        <taxon>Mus</taxon>
        <taxon>Mus</taxon>
    </lineage>
</organism>
<comment type="function">
    <text evidence="2">Dual specificity phosphatase; can dephosphorylate both phosphotyrosine and phosphoserine or phosphothreonine residues. Can dephosphorylate glucokinase (in vitro). Has phosphatase activity with the synthetic substrate 6,8-difluoro-4-methylumbelliferyl phosphate and other in vitro substrates.</text>
</comment>
<comment type="catalytic activity">
    <reaction evidence="2">
        <text>O-phospho-L-tyrosyl-[protein] + H2O = L-tyrosyl-[protein] + phosphate</text>
        <dbReference type="Rhea" id="RHEA:10684"/>
        <dbReference type="Rhea" id="RHEA-COMP:10136"/>
        <dbReference type="Rhea" id="RHEA-COMP:20101"/>
        <dbReference type="ChEBI" id="CHEBI:15377"/>
        <dbReference type="ChEBI" id="CHEBI:43474"/>
        <dbReference type="ChEBI" id="CHEBI:46858"/>
        <dbReference type="ChEBI" id="CHEBI:61978"/>
        <dbReference type="EC" id="3.1.3.48"/>
    </reaction>
</comment>
<comment type="catalytic activity">
    <reaction evidence="2">
        <text>O-phospho-L-seryl-[protein] + H2O = L-seryl-[protein] + phosphate</text>
        <dbReference type="Rhea" id="RHEA:20629"/>
        <dbReference type="Rhea" id="RHEA-COMP:9863"/>
        <dbReference type="Rhea" id="RHEA-COMP:11604"/>
        <dbReference type="ChEBI" id="CHEBI:15377"/>
        <dbReference type="ChEBI" id="CHEBI:29999"/>
        <dbReference type="ChEBI" id="CHEBI:43474"/>
        <dbReference type="ChEBI" id="CHEBI:83421"/>
        <dbReference type="EC" id="3.1.3.16"/>
    </reaction>
</comment>
<comment type="catalytic activity">
    <reaction evidence="2">
        <text>O-phospho-L-threonyl-[protein] + H2O = L-threonyl-[protein] + phosphate</text>
        <dbReference type="Rhea" id="RHEA:47004"/>
        <dbReference type="Rhea" id="RHEA-COMP:11060"/>
        <dbReference type="Rhea" id="RHEA-COMP:11605"/>
        <dbReference type="ChEBI" id="CHEBI:15377"/>
        <dbReference type="ChEBI" id="CHEBI:30013"/>
        <dbReference type="ChEBI" id="CHEBI:43474"/>
        <dbReference type="ChEBI" id="CHEBI:61977"/>
        <dbReference type="EC" id="3.1.3.16"/>
    </reaction>
</comment>
<comment type="cofactor">
    <cofactor evidence="1">
        <name>Zn(2+)</name>
        <dbReference type="ChEBI" id="CHEBI:29105"/>
    </cofactor>
    <text evidence="1">Binds 2 Zn(2+) ions per subunit.</text>
</comment>
<comment type="subunit">
    <text evidence="3">Monomer.</text>
</comment>
<comment type="subcellular location">
    <subcellularLocation>
        <location evidence="3">Nucleus</location>
    </subcellularLocation>
    <subcellularLocation>
        <location evidence="3">Cytoplasm</location>
        <location evidence="3">Cytosol</location>
    </subcellularLocation>
    <text evidence="3">Primarily nuclear. Detected in a mesh-like pattern in the cytosol.</text>
</comment>
<comment type="similarity">
    <text evidence="6">Belongs to the protein-tyrosine phosphatase family. Non-receptor class dual specificity subfamily.</text>
</comment>
<name>DUS12_MOUSE</name>
<reference key="1">
    <citation type="submission" date="2000-06" db="EMBL/GenBank/DDBJ databases">
        <title>Molecular cloning of putative dual specificity phosphatase T-DSP4.</title>
        <authorList>
            <person name="Aoyama K."/>
            <person name="Matsuda T."/>
            <person name="Aoki N."/>
        </authorList>
    </citation>
    <scope>NUCLEOTIDE SEQUENCE [MRNA]</scope>
</reference>
<reference key="2">
    <citation type="journal article" date="2000" name="Mamm. Genome">
        <title>mVH1, a dual-specificity phosphatase whose expression is cell cycle regulated.</title>
        <authorList>
            <person name="Zhang X.M."/>
            <person name="Dormady S.P."/>
            <person name="Chaung W."/>
            <person name="Basch R.S."/>
        </authorList>
    </citation>
    <scope>NUCLEOTIDE SEQUENCE [MRNA]</scope>
    <source>
        <strain>BALB/cJ</strain>
    </source>
</reference>
<reference key="3">
    <citation type="journal article" date="2005" name="Science">
        <title>The transcriptional landscape of the mammalian genome.</title>
        <authorList>
            <person name="Carninci P."/>
            <person name="Kasukawa T."/>
            <person name="Katayama S."/>
            <person name="Gough J."/>
            <person name="Frith M.C."/>
            <person name="Maeda N."/>
            <person name="Oyama R."/>
            <person name="Ravasi T."/>
            <person name="Lenhard B."/>
            <person name="Wells C."/>
            <person name="Kodzius R."/>
            <person name="Shimokawa K."/>
            <person name="Bajic V.B."/>
            <person name="Brenner S.E."/>
            <person name="Batalov S."/>
            <person name="Forrest A.R."/>
            <person name="Zavolan M."/>
            <person name="Davis M.J."/>
            <person name="Wilming L.G."/>
            <person name="Aidinis V."/>
            <person name="Allen J.E."/>
            <person name="Ambesi-Impiombato A."/>
            <person name="Apweiler R."/>
            <person name="Aturaliya R.N."/>
            <person name="Bailey T.L."/>
            <person name="Bansal M."/>
            <person name="Baxter L."/>
            <person name="Beisel K.W."/>
            <person name="Bersano T."/>
            <person name="Bono H."/>
            <person name="Chalk A.M."/>
            <person name="Chiu K.P."/>
            <person name="Choudhary V."/>
            <person name="Christoffels A."/>
            <person name="Clutterbuck D.R."/>
            <person name="Crowe M.L."/>
            <person name="Dalla E."/>
            <person name="Dalrymple B.P."/>
            <person name="de Bono B."/>
            <person name="Della Gatta G."/>
            <person name="di Bernardo D."/>
            <person name="Down T."/>
            <person name="Engstrom P."/>
            <person name="Fagiolini M."/>
            <person name="Faulkner G."/>
            <person name="Fletcher C.F."/>
            <person name="Fukushima T."/>
            <person name="Furuno M."/>
            <person name="Futaki S."/>
            <person name="Gariboldi M."/>
            <person name="Georgii-Hemming P."/>
            <person name="Gingeras T.R."/>
            <person name="Gojobori T."/>
            <person name="Green R.E."/>
            <person name="Gustincich S."/>
            <person name="Harbers M."/>
            <person name="Hayashi Y."/>
            <person name="Hensch T.K."/>
            <person name="Hirokawa N."/>
            <person name="Hill D."/>
            <person name="Huminiecki L."/>
            <person name="Iacono M."/>
            <person name="Ikeo K."/>
            <person name="Iwama A."/>
            <person name="Ishikawa T."/>
            <person name="Jakt M."/>
            <person name="Kanapin A."/>
            <person name="Katoh M."/>
            <person name="Kawasawa Y."/>
            <person name="Kelso J."/>
            <person name="Kitamura H."/>
            <person name="Kitano H."/>
            <person name="Kollias G."/>
            <person name="Krishnan S.P."/>
            <person name="Kruger A."/>
            <person name="Kummerfeld S.K."/>
            <person name="Kurochkin I.V."/>
            <person name="Lareau L.F."/>
            <person name="Lazarevic D."/>
            <person name="Lipovich L."/>
            <person name="Liu J."/>
            <person name="Liuni S."/>
            <person name="McWilliam S."/>
            <person name="Madan Babu M."/>
            <person name="Madera M."/>
            <person name="Marchionni L."/>
            <person name="Matsuda H."/>
            <person name="Matsuzawa S."/>
            <person name="Miki H."/>
            <person name="Mignone F."/>
            <person name="Miyake S."/>
            <person name="Morris K."/>
            <person name="Mottagui-Tabar S."/>
            <person name="Mulder N."/>
            <person name="Nakano N."/>
            <person name="Nakauchi H."/>
            <person name="Ng P."/>
            <person name="Nilsson R."/>
            <person name="Nishiguchi S."/>
            <person name="Nishikawa S."/>
            <person name="Nori F."/>
            <person name="Ohara O."/>
            <person name="Okazaki Y."/>
            <person name="Orlando V."/>
            <person name="Pang K.C."/>
            <person name="Pavan W.J."/>
            <person name="Pavesi G."/>
            <person name="Pesole G."/>
            <person name="Petrovsky N."/>
            <person name="Piazza S."/>
            <person name="Reed J."/>
            <person name="Reid J.F."/>
            <person name="Ring B.Z."/>
            <person name="Ringwald M."/>
            <person name="Rost B."/>
            <person name="Ruan Y."/>
            <person name="Salzberg S.L."/>
            <person name="Sandelin A."/>
            <person name="Schneider C."/>
            <person name="Schoenbach C."/>
            <person name="Sekiguchi K."/>
            <person name="Semple C.A."/>
            <person name="Seno S."/>
            <person name="Sessa L."/>
            <person name="Sheng Y."/>
            <person name="Shibata Y."/>
            <person name="Shimada H."/>
            <person name="Shimada K."/>
            <person name="Silva D."/>
            <person name="Sinclair B."/>
            <person name="Sperling S."/>
            <person name="Stupka E."/>
            <person name="Sugiura K."/>
            <person name="Sultana R."/>
            <person name="Takenaka Y."/>
            <person name="Taki K."/>
            <person name="Tammoja K."/>
            <person name="Tan S.L."/>
            <person name="Tang S."/>
            <person name="Taylor M.S."/>
            <person name="Tegner J."/>
            <person name="Teichmann S.A."/>
            <person name="Ueda H.R."/>
            <person name="van Nimwegen E."/>
            <person name="Verardo R."/>
            <person name="Wei C.L."/>
            <person name="Yagi K."/>
            <person name="Yamanishi H."/>
            <person name="Zabarovsky E."/>
            <person name="Zhu S."/>
            <person name="Zimmer A."/>
            <person name="Hide W."/>
            <person name="Bult C."/>
            <person name="Grimmond S.M."/>
            <person name="Teasdale R.D."/>
            <person name="Liu E.T."/>
            <person name="Brusic V."/>
            <person name="Quackenbush J."/>
            <person name="Wahlestedt C."/>
            <person name="Mattick J.S."/>
            <person name="Hume D.A."/>
            <person name="Kai C."/>
            <person name="Sasaki D."/>
            <person name="Tomaru Y."/>
            <person name="Fukuda S."/>
            <person name="Kanamori-Katayama M."/>
            <person name="Suzuki M."/>
            <person name="Aoki J."/>
            <person name="Arakawa T."/>
            <person name="Iida J."/>
            <person name="Imamura K."/>
            <person name="Itoh M."/>
            <person name="Kato T."/>
            <person name="Kawaji H."/>
            <person name="Kawagashira N."/>
            <person name="Kawashima T."/>
            <person name="Kojima M."/>
            <person name="Kondo S."/>
            <person name="Konno H."/>
            <person name="Nakano K."/>
            <person name="Ninomiya N."/>
            <person name="Nishio T."/>
            <person name="Okada M."/>
            <person name="Plessy C."/>
            <person name="Shibata K."/>
            <person name="Shiraki T."/>
            <person name="Suzuki S."/>
            <person name="Tagami M."/>
            <person name="Waki K."/>
            <person name="Watahiki A."/>
            <person name="Okamura-Oho Y."/>
            <person name="Suzuki H."/>
            <person name="Kawai J."/>
            <person name="Hayashizaki Y."/>
        </authorList>
    </citation>
    <scope>NUCLEOTIDE SEQUENCE [LARGE SCALE MRNA]</scope>
    <source>
        <strain>C57BL/6J</strain>
        <tissue>Embryo</tissue>
    </source>
</reference>
<evidence type="ECO:0000250" key="1"/>
<evidence type="ECO:0000250" key="2">
    <source>
        <dbReference type="UniProtKB" id="Q9JIM4"/>
    </source>
</evidence>
<evidence type="ECO:0000250" key="3">
    <source>
        <dbReference type="UniProtKB" id="Q9UNI6"/>
    </source>
</evidence>
<evidence type="ECO:0000255" key="4">
    <source>
        <dbReference type="PROSITE-ProRule" id="PRU00160"/>
    </source>
</evidence>
<evidence type="ECO:0000256" key="5">
    <source>
        <dbReference type="SAM" id="MobiDB-lite"/>
    </source>
</evidence>
<evidence type="ECO:0000305" key="6"/>